<gene>
    <name type="primary">nisR</name>
</gene>
<name>NISR_LACLL</name>
<comment type="function">
    <text>Member of the two-component regulatory system NisK/NisR involved in the regulation of the biosynthesis of lantibiotic nisin. NisR may function as a regulatory protein.</text>
</comment>
<comment type="PTM">
    <text evidence="3">Phosphorylated by NisK.</text>
</comment>
<feature type="chain" id="PRO_0000081151" description="Nisin biosynthesis regulatory protein NisR">
    <location>
        <begin position="1"/>
        <end position="229"/>
    </location>
</feature>
<feature type="domain" description="Response regulatory" evidence="1">
    <location>
        <begin position="4"/>
        <end position="117"/>
    </location>
</feature>
<feature type="DNA-binding region" description="OmpR/PhoB-type" evidence="2">
    <location>
        <begin position="132"/>
        <end position="229"/>
    </location>
</feature>
<feature type="modified residue" description="4-aspartylphosphate" evidence="1">
    <location>
        <position position="53"/>
    </location>
</feature>
<feature type="sequence conflict" description="In Ref. 2." evidence="3" ref="2">
    <location>
        <position position="2"/>
    </location>
</feature>
<sequence>MVYKILIVDDDQEILKLMKTALEMRNYEVATHQNISLPLDITDFQGFDLILLDIMMSNIEGTEICKRIRREISTPIIFVSAKDTEEDIINGLGIGGDDYITKPFSLKQLVAKVEANIKREERNKHAVHVFSEIRRDLGPITFYLEERRVCVNGQTIPLTCREYDILELLSQRTSKVYTREDIYDDVYDEYSNALFRSISEYIYQIRSKFAPYDINPIKTVRGLGYQWHG</sequence>
<proteinExistence type="inferred from homology"/>
<protein>
    <recommendedName>
        <fullName>Nisin biosynthesis regulatory protein NisR</fullName>
    </recommendedName>
</protein>
<dbReference type="EMBL" id="Z22813">
    <property type="protein sequence ID" value="CAA80466.1"/>
    <property type="molecule type" value="Genomic_DNA"/>
</dbReference>
<dbReference type="EMBL" id="L11061">
    <property type="protein sequence ID" value="AAA25201.1"/>
    <property type="molecule type" value="Genomic_DNA"/>
</dbReference>
<dbReference type="EMBL" id="X76884">
    <property type="protein sequence ID" value="CAA54211.1"/>
    <property type="molecule type" value="Genomic_DNA"/>
</dbReference>
<dbReference type="PIR" id="B40621">
    <property type="entry name" value="B40621"/>
</dbReference>
<dbReference type="RefSeq" id="WP_014734918.1">
    <property type="nucleotide sequence ID" value="NZ_QYRO01000015.1"/>
</dbReference>
<dbReference type="SMR" id="Q07597"/>
<dbReference type="GO" id="GO:0005829">
    <property type="term" value="C:cytosol"/>
    <property type="evidence" value="ECO:0007669"/>
    <property type="project" value="TreeGrafter"/>
</dbReference>
<dbReference type="GO" id="GO:0032993">
    <property type="term" value="C:protein-DNA complex"/>
    <property type="evidence" value="ECO:0007669"/>
    <property type="project" value="TreeGrafter"/>
</dbReference>
<dbReference type="GO" id="GO:0000156">
    <property type="term" value="F:phosphorelay response regulator activity"/>
    <property type="evidence" value="ECO:0007669"/>
    <property type="project" value="TreeGrafter"/>
</dbReference>
<dbReference type="GO" id="GO:0000976">
    <property type="term" value="F:transcription cis-regulatory region binding"/>
    <property type="evidence" value="ECO:0007669"/>
    <property type="project" value="TreeGrafter"/>
</dbReference>
<dbReference type="GO" id="GO:0006355">
    <property type="term" value="P:regulation of DNA-templated transcription"/>
    <property type="evidence" value="ECO:0007669"/>
    <property type="project" value="InterPro"/>
</dbReference>
<dbReference type="CDD" id="cd17574">
    <property type="entry name" value="REC_OmpR"/>
    <property type="match status" value="1"/>
</dbReference>
<dbReference type="CDD" id="cd00383">
    <property type="entry name" value="trans_reg_C"/>
    <property type="match status" value="1"/>
</dbReference>
<dbReference type="Gene3D" id="3.40.50.2300">
    <property type="match status" value="1"/>
</dbReference>
<dbReference type="Gene3D" id="6.10.250.690">
    <property type="match status" value="1"/>
</dbReference>
<dbReference type="Gene3D" id="1.10.10.10">
    <property type="entry name" value="Winged helix-like DNA-binding domain superfamily/Winged helix DNA-binding domain"/>
    <property type="match status" value="1"/>
</dbReference>
<dbReference type="InterPro" id="IPR011006">
    <property type="entry name" value="CheY-like_superfamily"/>
</dbReference>
<dbReference type="InterPro" id="IPR001867">
    <property type="entry name" value="OmpR/PhoB-type_DNA-bd"/>
</dbReference>
<dbReference type="InterPro" id="IPR001789">
    <property type="entry name" value="Sig_transdc_resp-reg_receiver"/>
</dbReference>
<dbReference type="InterPro" id="IPR039420">
    <property type="entry name" value="WalR-like"/>
</dbReference>
<dbReference type="InterPro" id="IPR036388">
    <property type="entry name" value="WH-like_DNA-bd_sf"/>
</dbReference>
<dbReference type="PANTHER" id="PTHR48111">
    <property type="entry name" value="REGULATOR OF RPOS"/>
    <property type="match status" value="1"/>
</dbReference>
<dbReference type="PANTHER" id="PTHR48111:SF2">
    <property type="entry name" value="RESPONSE REGULATOR SAER"/>
    <property type="match status" value="1"/>
</dbReference>
<dbReference type="Pfam" id="PF00072">
    <property type="entry name" value="Response_reg"/>
    <property type="match status" value="1"/>
</dbReference>
<dbReference type="Pfam" id="PF00486">
    <property type="entry name" value="Trans_reg_C"/>
    <property type="match status" value="1"/>
</dbReference>
<dbReference type="SMART" id="SM00448">
    <property type="entry name" value="REC"/>
    <property type="match status" value="1"/>
</dbReference>
<dbReference type="SMART" id="SM00862">
    <property type="entry name" value="Trans_reg_C"/>
    <property type="match status" value="1"/>
</dbReference>
<dbReference type="SUPFAM" id="SSF52172">
    <property type="entry name" value="CheY-like"/>
    <property type="match status" value="1"/>
</dbReference>
<dbReference type="PROSITE" id="PS51755">
    <property type="entry name" value="OMPR_PHOB"/>
    <property type="match status" value="1"/>
</dbReference>
<dbReference type="PROSITE" id="PS50110">
    <property type="entry name" value="RESPONSE_REGULATORY"/>
    <property type="match status" value="1"/>
</dbReference>
<reference key="1">
    <citation type="journal article" date="1993" name="J. Bacteriol.">
        <title>Characterization of the Lactococcus lactis nisin A operon genes nisP, encoding a subtilisin-like serine protease involved in precursor processing, and nisR, encoding a regulatory protein involved in nisin biosynthesis.</title>
        <authorList>
            <person name="van der Meer J.R."/>
            <person name="Polman J."/>
            <person name="Beerthuyzen M.M."/>
            <person name="Siezen R.J."/>
            <person name="Kuipers O.P."/>
            <person name="de Vos W.M."/>
        </authorList>
    </citation>
    <scope>NUCLEOTIDE SEQUENCE [GENOMIC DNA]</scope>
    <source>
        <strain>NIZO R5</strain>
    </source>
</reference>
<reference key="2">
    <citation type="journal article" date="1994" name="Appl. Environ. Microbiol.">
        <title>Regulation of nisin biosynthesis and immunity in Lactococcus lactis 6F3.</title>
        <authorList>
            <person name="Engelke G."/>
            <person name="Gutowski-Eckel Z."/>
            <person name="Kiesau P."/>
            <person name="Siegers K."/>
            <person name="Hammelmann M."/>
            <person name="Entian K.-D."/>
        </authorList>
    </citation>
    <scope>NUCLEOTIDE SEQUENCE [GENOMIC DNA]</scope>
    <source>
        <strain>6F3</strain>
    </source>
</reference>
<evidence type="ECO:0000255" key="1">
    <source>
        <dbReference type="PROSITE-ProRule" id="PRU00169"/>
    </source>
</evidence>
<evidence type="ECO:0000255" key="2">
    <source>
        <dbReference type="PROSITE-ProRule" id="PRU01091"/>
    </source>
</evidence>
<evidence type="ECO:0000305" key="3"/>
<organism>
    <name type="scientific">Lactococcus lactis subsp. lactis</name>
    <name type="common">Streptococcus lactis</name>
    <dbReference type="NCBI Taxonomy" id="1360"/>
    <lineage>
        <taxon>Bacteria</taxon>
        <taxon>Bacillati</taxon>
        <taxon>Bacillota</taxon>
        <taxon>Bacilli</taxon>
        <taxon>Lactobacillales</taxon>
        <taxon>Streptococcaceae</taxon>
        <taxon>Lactococcus</taxon>
    </lineage>
</organism>
<accession>Q07597</accession>
<keyword id="KW-0010">Activator</keyword>
<keyword id="KW-0238">DNA-binding</keyword>
<keyword id="KW-0597">Phosphoprotein</keyword>
<keyword id="KW-0804">Transcription</keyword>
<keyword id="KW-0805">Transcription regulation</keyword>
<keyword id="KW-0902">Two-component regulatory system</keyword>